<gene>
    <name type="primary">STS1</name>
    <name type="synonym">DBF8</name>
    <name type="synonym">SSM5</name>
    <name type="ORF">SCRG_05168</name>
</gene>
<dbReference type="EMBL" id="CH408055">
    <property type="protein sequence ID" value="EDV09479.1"/>
    <property type="molecule type" value="Genomic_DNA"/>
</dbReference>
<dbReference type="SMR" id="B3LTJ8"/>
<dbReference type="HOGENOM" id="CLU_054606_1_0_1"/>
<dbReference type="OrthoDB" id="28232at4893"/>
<dbReference type="Proteomes" id="UP000008335">
    <property type="component" value="Unassembled WGS sequence"/>
</dbReference>
<dbReference type="GO" id="GO:0005737">
    <property type="term" value="C:cytoplasm"/>
    <property type="evidence" value="ECO:0007669"/>
    <property type="project" value="UniProtKB-SubCell"/>
</dbReference>
<dbReference type="GO" id="GO:0031965">
    <property type="term" value="C:nuclear membrane"/>
    <property type="evidence" value="ECO:0007669"/>
    <property type="project" value="TreeGrafter"/>
</dbReference>
<dbReference type="GO" id="GO:0070628">
    <property type="term" value="F:proteasome binding"/>
    <property type="evidence" value="ECO:0007669"/>
    <property type="project" value="TreeGrafter"/>
</dbReference>
<dbReference type="GO" id="GO:0071630">
    <property type="term" value="P:nuclear protein quality control by the ubiquitin-proteasome system"/>
    <property type="evidence" value="ECO:0007669"/>
    <property type="project" value="InterPro"/>
</dbReference>
<dbReference type="GO" id="GO:0031144">
    <property type="term" value="P:proteasome localization"/>
    <property type="evidence" value="ECO:0007669"/>
    <property type="project" value="InterPro"/>
</dbReference>
<dbReference type="GO" id="GO:0015031">
    <property type="term" value="P:protein transport"/>
    <property type="evidence" value="ECO:0007669"/>
    <property type="project" value="UniProtKB-KW"/>
</dbReference>
<dbReference type="FunFam" id="1.20.58.1590:FF:000003">
    <property type="entry name" value="Tethering factor for nuclear proteasome STS1"/>
    <property type="match status" value="1"/>
</dbReference>
<dbReference type="Gene3D" id="1.20.58.1590">
    <property type="entry name" value="Tethering factor for nuclear proteasome Cut8/Sts1"/>
    <property type="match status" value="1"/>
</dbReference>
<dbReference type="InterPro" id="IPR013868">
    <property type="entry name" value="Cut8/Sts1_fam"/>
</dbReference>
<dbReference type="InterPro" id="IPR038422">
    <property type="entry name" value="Cut8/Sts1_sf"/>
</dbReference>
<dbReference type="PANTHER" id="PTHR28032">
    <property type="entry name" value="FI02826P"/>
    <property type="match status" value="1"/>
</dbReference>
<dbReference type="PANTHER" id="PTHR28032:SF1">
    <property type="entry name" value="FI02826P"/>
    <property type="match status" value="1"/>
</dbReference>
<dbReference type="Pfam" id="PF08559">
    <property type="entry name" value="Cut8"/>
    <property type="match status" value="1"/>
</dbReference>
<name>STS1_YEAS1</name>
<accession>B3LTJ8</accession>
<protein>
    <recommendedName>
        <fullName>Tethering factor for nuclear proteasome STS1</fullName>
    </recommendedName>
    <alternativeName>
        <fullName>Dumbbell former protein 8</fullName>
    </alternativeName>
    <alternativeName>
        <fullName>SEC23 suppressor 1</fullName>
    </alternativeName>
</protein>
<comment type="function">
    <text evidence="1">Involved in ubiquitin-mediated protein degradation. Regulatory factor in the ubiquitin/proteasome pathway that controls the turnover of proteasome substrates. Targets proteasomes to the nucleus and facilitates the degradation of nuclear proteins (By similarity).</text>
</comment>
<comment type="subunit">
    <text evidence="1">Binds the proteasome. Interacts with karyopherin SRP1 and Proteasome subunit RPN11.</text>
</comment>
<comment type="subcellular location">
    <subcellularLocation>
        <location evidence="1">Cytoplasm</location>
    </subcellularLocation>
    <subcellularLocation>
        <location evidence="1">Nucleus</location>
    </subcellularLocation>
</comment>
<comment type="similarity">
    <text evidence="3">Belongs to the cut8/STS1 family.</text>
</comment>
<sequence length="319" mass="36485">MMGFEWGFKPSSKITQSTVSSQGTGNVMIPTAGVKQKRRYANEEQEEEELPRNKNVMKYGGVSKRRPQPGSLIRGQPLPLQRGMELMNKNQLQQLLVDLMTKHPEIQQSVHTRVIGLDFSIQKCLDMLKQKSEAVYQSIPYNRSYESNKLDDYAFVRMKPQILEFLNCLVDFILDNIPPRLENLHASLKFLDICTELVIKLPRFELASNNYYYDKCIEQLSHVWCTLIEHVARDRIILLADNSSVWKSHMTRLQVYNEHSNGLLERPLQLFKSLDMGSPSAASSSTLSLQESIIYHHDTMTANENNNNSGSAATDSPFN</sequence>
<organism>
    <name type="scientific">Saccharomyces cerevisiae (strain RM11-1a)</name>
    <name type="common">Baker's yeast</name>
    <dbReference type="NCBI Taxonomy" id="285006"/>
    <lineage>
        <taxon>Eukaryota</taxon>
        <taxon>Fungi</taxon>
        <taxon>Dikarya</taxon>
        <taxon>Ascomycota</taxon>
        <taxon>Saccharomycotina</taxon>
        <taxon>Saccharomycetes</taxon>
        <taxon>Saccharomycetales</taxon>
        <taxon>Saccharomycetaceae</taxon>
        <taxon>Saccharomyces</taxon>
    </lineage>
</organism>
<reference key="1">
    <citation type="submission" date="2005-03" db="EMBL/GenBank/DDBJ databases">
        <title>Annotation of the Saccharomyces cerevisiae RM11-1a genome.</title>
        <authorList>
            <consortium name="The Broad Institute Genome Sequencing Platform"/>
            <person name="Birren B.W."/>
            <person name="Lander E.S."/>
            <person name="Galagan J.E."/>
            <person name="Nusbaum C."/>
            <person name="Devon K."/>
            <person name="Cuomo C."/>
            <person name="Jaffe D.B."/>
            <person name="Butler J."/>
            <person name="Alvarez P."/>
            <person name="Gnerre S."/>
            <person name="Grabherr M."/>
            <person name="Kleber M."/>
            <person name="Mauceli E.W."/>
            <person name="Brockman W."/>
            <person name="MacCallum I.A."/>
            <person name="Rounsley S."/>
            <person name="Young S.K."/>
            <person name="LaButti K."/>
            <person name="Pushparaj V."/>
            <person name="DeCaprio D."/>
            <person name="Crawford M."/>
            <person name="Koehrsen M."/>
            <person name="Engels R."/>
            <person name="Montgomery P."/>
            <person name="Pearson M."/>
            <person name="Howarth C."/>
            <person name="Larson L."/>
            <person name="Luoma S."/>
            <person name="White J."/>
            <person name="O'Leary S."/>
            <person name="Kodira C.D."/>
            <person name="Zeng Q."/>
            <person name="Yandava C."/>
            <person name="Alvarado L."/>
            <person name="Pratt S."/>
            <person name="Kruglyak L."/>
        </authorList>
    </citation>
    <scope>NUCLEOTIDE SEQUENCE [LARGE SCALE GENOMIC DNA]</scope>
    <source>
        <strain>RM11-1a</strain>
    </source>
</reference>
<feature type="chain" id="PRO_0000409436" description="Tethering factor for nuclear proteasome STS1">
    <location>
        <begin position="1"/>
        <end position="319"/>
    </location>
</feature>
<feature type="region of interest" description="Disordered" evidence="2">
    <location>
        <begin position="33"/>
        <end position="76"/>
    </location>
</feature>
<evidence type="ECO:0000250" key="1"/>
<evidence type="ECO:0000256" key="2">
    <source>
        <dbReference type="SAM" id="MobiDB-lite"/>
    </source>
</evidence>
<evidence type="ECO:0000305" key="3"/>
<proteinExistence type="inferred from homology"/>
<keyword id="KW-0963">Cytoplasm</keyword>
<keyword id="KW-0539">Nucleus</keyword>
<keyword id="KW-0653">Protein transport</keyword>
<keyword id="KW-0813">Transport</keyword>